<sequence>MARRGKKKGRPISGWVIFDKPKGMGSTEAVSKIKWLFSAEKAGHAGTLDPLASGMLPIALGEATKTVPYAMDGTKVYRFTVTWGEERSTDDLEGQPTKTSDKRPSREEVEALLPDYTGVISQVPPQFSAIKIDGERAYDLAREGETVEIPAREVEIDRLEIVGFPDADRTEFEVECSKGTYVRSLARDMGRDLGCYGHISDLRRVEVAPFTDEDMVTLAKLEAVWPPLPPKDEDGNVIEPAPRRDFSALDALVIDTGAALDCLPQVPLSDDQAQRVRLGNPVILRGRDAPLEADEACVTTRGKLLAIGYIEHGQFKPKRVFTAG</sequence>
<reference key="1">
    <citation type="journal article" date="2002" name="Proc. Natl. Acad. Sci. U.S.A.">
        <title>The genome sequence of the facultative intracellular pathogen Brucella melitensis.</title>
        <authorList>
            <person name="DelVecchio V.G."/>
            <person name="Kapatral V."/>
            <person name="Redkar R.J."/>
            <person name="Patra G."/>
            <person name="Mujer C."/>
            <person name="Los T."/>
            <person name="Ivanova N."/>
            <person name="Anderson I."/>
            <person name="Bhattacharyya A."/>
            <person name="Lykidis A."/>
            <person name="Reznik G."/>
            <person name="Jablonski L."/>
            <person name="Larsen N."/>
            <person name="D'Souza M."/>
            <person name="Bernal A."/>
            <person name="Mazur M."/>
            <person name="Goltsman E."/>
            <person name="Selkov E."/>
            <person name="Elzer P.H."/>
            <person name="Hagius S."/>
            <person name="O'Callaghan D."/>
            <person name="Letesson J.-J."/>
            <person name="Haselkorn R."/>
            <person name="Kyrpides N.C."/>
            <person name="Overbeek R."/>
        </authorList>
    </citation>
    <scope>NUCLEOTIDE SEQUENCE [LARGE SCALE GENOMIC DNA]</scope>
    <source>
        <strain>ATCC 23456 / CCUG 17765 / NCTC 10094 / 16M</strain>
    </source>
</reference>
<comment type="function">
    <text evidence="1">Responsible for synthesis of pseudouridine from uracil-55 in the psi GC loop of transfer RNAs.</text>
</comment>
<comment type="catalytic activity">
    <reaction evidence="1">
        <text>uridine(55) in tRNA = pseudouridine(55) in tRNA</text>
        <dbReference type="Rhea" id="RHEA:42532"/>
        <dbReference type="Rhea" id="RHEA-COMP:10101"/>
        <dbReference type="Rhea" id="RHEA-COMP:10102"/>
        <dbReference type="ChEBI" id="CHEBI:65314"/>
        <dbReference type="ChEBI" id="CHEBI:65315"/>
        <dbReference type="EC" id="5.4.99.25"/>
    </reaction>
</comment>
<comment type="similarity">
    <text evidence="1">Belongs to the pseudouridine synthase TruB family. Type 1 subfamily.</text>
</comment>
<name>TRUB_BRUME</name>
<dbReference type="EC" id="5.4.99.25" evidence="1"/>
<dbReference type="EMBL" id="AE008917">
    <property type="protein sequence ID" value="AAL53144.1"/>
    <property type="molecule type" value="Genomic_DNA"/>
</dbReference>
<dbReference type="PIR" id="AE3497">
    <property type="entry name" value="AE3497"/>
</dbReference>
<dbReference type="RefSeq" id="WP_004684584.1">
    <property type="nucleotide sequence ID" value="NZ_GG703778.1"/>
</dbReference>
<dbReference type="SMR" id="Q8YEB5"/>
<dbReference type="GeneID" id="29594844"/>
<dbReference type="KEGG" id="bme:BMEI1963"/>
<dbReference type="KEGG" id="bmel:DK63_1527"/>
<dbReference type="PATRIC" id="fig|224914.52.peg.1613"/>
<dbReference type="eggNOG" id="COG0130">
    <property type="taxonomic scope" value="Bacteria"/>
</dbReference>
<dbReference type="PhylomeDB" id="Q8YEB5"/>
<dbReference type="Proteomes" id="UP000000419">
    <property type="component" value="Chromosome I"/>
</dbReference>
<dbReference type="GO" id="GO:0003723">
    <property type="term" value="F:RNA binding"/>
    <property type="evidence" value="ECO:0007669"/>
    <property type="project" value="InterPro"/>
</dbReference>
<dbReference type="GO" id="GO:0160148">
    <property type="term" value="F:tRNA pseudouridine(55) synthase activity"/>
    <property type="evidence" value="ECO:0007669"/>
    <property type="project" value="UniProtKB-EC"/>
</dbReference>
<dbReference type="GO" id="GO:1990481">
    <property type="term" value="P:mRNA pseudouridine synthesis"/>
    <property type="evidence" value="ECO:0007669"/>
    <property type="project" value="TreeGrafter"/>
</dbReference>
<dbReference type="GO" id="GO:0031119">
    <property type="term" value="P:tRNA pseudouridine synthesis"/>
    <property type="evidence" value="ECO:0007669"/>
    <property type="project" value="UniProtKB-UniRule"/>
</dbReference>
<dbReference type="CDD" id="cd02573">
    <property type="entry name" value="PseudoU_synth_EcTruB"/>
    <property type="match status" value="1"/>
</dbReference>
<dbReference type="Gene3D" id="3.30.2350.10">
    <property type="entry name" value="Pseudouridine synthase"/>
    <property type="match status" value="1"/>
</dbReference>
<dbReference type="HAMAP" id="MF_01080">
    <property type="entry name" value="TruB_bact"/>
    <property type="match status" value="1"/>
</dbReference>
<dbReference type="InterPro" id="IPR020103">
    <property type="entry name" value="PsdUridine_synth_cat_dom_sf"/>
</dbReference>
<dbReference type="InterPro" id="IPR002501">
    <property type="entry name" value="PsdUridine_synth_N"/>
</dbReference>
<dbReference type="InterPro" id="IPR014780">
    <property type="entry name" value="tRNA_psdUridine_synth_TruB"/>
</dbReference>
<dbReference type="InterPro" id="IPR015240">
    <property type="entry name" value="tRNA_sdUridine_synth_fam1_C"/>
</dbReference>
<dbReference type="InterPro" id="IPR032819">
    <property type="entry name" value="TruB_C"/>
</dbReference>
<dbReference type="NCBIfam" id="TIGR00431">
    <property type="entry name" value="TruB"/>
    <property type="match status" value="1"/>
</dbReference>
<dbReference type="PANTHER" id="PTHR13767:SF2">
    <property type="entry name" value="PSEUDOURIDYLATE SYNTHASE TRUB1"/>
    <property type="match status" value="1"/>
</dbReference>
<dbReference type="PANTHER" id="PTHR13767">
    <property type="entry name" value="TRNA-PSEUDOURIDINE SYNTHASE"/>
    <property type="match status" value="1"/>
</dbReference>
<dbReference type="Pfam" id="PF09157">
    <property type="entry name" value="TruB-C_2"/>
    <property type="match status" value="1"/>
</dbReference>
<dbReference type="Pfam" id="PF16198">
    <property type="entry name" value="TruB_C_2"/>
    <property type="match status" value="1"/>
</dbReference>
<dbReference type="Pfam" id="PF01509">
    <property type="entry name" value="TruB_N"/>
    <property type="match status" value="1"/>
</dbReference>
<dbReference type="SUPFAM" id="SSF55120">
    <property type="entry name" value="Pseudouridine synthase"/>
    <property type="match status" value="1"/>
</dbReference>
<accession>Q8YEB5</accession>
<feature type="chain" id="PRO_0000121804" description="tRNA pseudouridine synthase B">
    <location>
        <begin position="1"/>
        <end position="324"/>
    </location>
</feature>
<feature type="region of interest" description="Disordered" evidence="2">
    <location>
        <begin position="87"/>
        <end position="107"/>
    </location>
</feature>
<feature type="active site" description="Nucleophile" evidence="1">
    <location>
        <position position="49"/>
    </location>
</feature>
<keyword id="KW-0413">Isomerase</keyword>
<keyword id="KW-0819">tRNA processing</keyword>
<protein>
    <recommendedName>
        <fullName evidence="1">tRNA pseudouridine synthase B</fullName>
        <ecNumber evidence="1">5.4.99.25</ecNumber>
    </recommendedName>
    <alternativeName>
        <fullName evidence="1">tRNA pseudouridine(55) synthase</fullName>
        <shortName evidence="1">Psi55 synthase</shortName>
    </alternativeName>
    <alternativeName>
        <fullName evidence="1">tRNA pseudouridylate synthase</fullName>
    </alternativeName>
    <alternativeName>
        <fullName evidence="1">tRNA-uridine isomerase</fullName>
    </alternativeName>
</protein>
<organism>
    <name type="scientific">Brucella melitensis biotype 1 (strain ATCC 23456 / CCUG 17765 / NCTC 10094 / 16M)</name>
    <dbReference type="NCBI Taxonomy" id="224914"/>
    <lineage>
        <taxon>Bacteria</taxon>
        <taxon>Pseudomonadati</taxon>
        <taxon>Pseudomonadota</taxon>
        <taxon>Alphaproteobacteria</taxon>
        <taxon>Hyphomicrobiales</taxon>
        <taxon>Brucellaceae</taxon>
        <taxon>Brucella/Ochrobactrum group</taxon>
        <taxon>Brucella</taxon>
    </lineage>
</organism>
<gene>
    <name evidence="1" type="primary">truB</name>
    <name type="ordered locus">BMEI1963</name>
</gene>
<evidence type="ECO:0000255" key="1">
    <source>
        <dbReference type="HAMAP-Rule" id="MF_01080"/>
    </source>
</evidence>
<evidence type="ECO:0000256" key="2">
    <source>
        <dbReference type="SAM" id="MobiDB-lite"/>
    </source>
</evidence>
<proteinExistence type="inferred from homology"/>